<proteinExistence type="evidence at protein level"/>
<evidence type="ECO:0000250" key="1"/>
<evidence type="ECO:0000256" key="2">
    <source>
        <dbReference type="SAM" id="MobiDB-lite"/>
    </source>
</evidence>
<evidence type="ECO:0000305" key="3"/>
<keyword id="KW-0010">Activator</keyword>
<keyword id="KW-0963">Cytoplasm</keyword>
<keyword id="KW-0238">DNA-binding</keyword>
<keyword id="KW-0539">Nucleus</keyword>
<keyword id="KW-0597">Phosphoprotein</keyword>
<keyword id="KW-1185">Reference proteome</keyword>
<keyword id="KW-0346">Stress response</keyword>
<keyword id="KW-0804">Transcription</keyword>
<keyword id="KW-0805">Transcription regulation</keyword>
<dbReference type="EMBL" id="L06126">
    <property type="protein sequence ID" value="AFP54345.1"/>
    <property type="molecule type" value="mRNA"/>
</dbReference>
<dbReference type="PIR" id="A48092">
    <property type="entry name" value="A48092"/>
</dbReference>
<dbReference type="RefSeq" id="NP_001291970.1">
    <property type="nucleotide sequence ID" value="NM_001305041.1"/>
</dbReference>
<dbReference type="SMR" id="P38531"/>
<dbReference type="BioGRID" id="682892">
    <property type="interactions" value="3"/>
</dbReference>
<dbReference type="DIP" id="DIP-235N"/>
<dbReference type="FunCoup" id="P38531">
    <property type="interactions" value="20"/>
</dbReference>
<dbReference type="IntAct" id="P38531">
    <property type="interactions" value="1"/>
</dbReference>
<dbReference type="STRING" id="9031.ENSGALP00000055723"/>
<dbReference type="PaxDb" id="9031-ENSGALP00000039922"/>
<dbReference type="GeneID" id="422169"/>
<dbReference type="KEGG" id="gga:422169"/>
<dbReference type="CTD" id="245525"/>
<dbReference type="VEuPathDB" id="HostDB:geneid_422169"/>
<dbReference type="eggNOG" id="KOG0627">
    <property type="taxonomic scope" value="Eukaryota"/>
</dbReference>
<dbReference type="HOGENOM" id="CLU_038829_3_0_1"/>
<dbReference type="InParanoid" id="P38531"/>
<dbReference type="OrthoDB" id="60033at2759"/>
<dbReference type="PhylomeDB" id="P38531"/>
<dbReference type="TreeFam" id="TF330401"/>
<dbReference type="PRO" id="PR:P38531"/>
<dbReference type="Proteomes" id="UP000000539">
    <property type="component" value="Unassembled WGS sequence"/>
</dbReference>
<dbReference type="GO" id="GO:0000785">
    <property type="term" value="C:chromatin"/>
    <property type="evidence" value="ECO:0000314"/>
    <property type="project" value="AgBase"/>
</dbReference>
<dbReference type="GO" id="GO:0005737">
    <property type="term" value="C:cytoplasm"/>
    <property type="evidence" value="ECO:0000314"/>
    <property type="project" value="AgBase"/>
</dbReference>
<dbReference type="GO" id="GO:0005634">
    <property type="term" value="C:nucleus"/>
    <property type="evidence" value="ECO:0000314"/>
    <property type="project" value="AgBase"/>
</dbReference>
<dbReference type="GO" id="GO:0001046">
    <property type="term" value="F:core promoter sequence-specific DNA binding"/>
    <property type="evidence" value="ECO:0000314"/>
    <property type="project" value="AgBase"/>
</dbReference>
<dbReference type="GO" id="GO:0003677">
    <property type="term" value="F:DNA binding"/>
    <property type="evidence" value="ECO:0000314"/>
    <property type="project" value="AgBase"/>
</dbReference>
<dbReference type="GO" id="GO:0001228">
    <property type="term" value="F:DNA-binding transcription activator activity, RNA polymerase II-specific"/>
    <property type="evidence" value="ECO:0000314"/>
    <property type="project" value="ARUK-UCL"/>
</dbReference>
<dbReference type="GO" id="GO:0042803">
    <property type="term" value="F:protein homodimerization activity"/>
    <property type="evidence" value="ECO:0000314"/>
    <property type="project" value="AgBase"/>
</dbReference>
<dbReference type="GO" id="GO:0000978">
    <property type="term" value="F:RNA polymerase II cis-regulatory region sequence-specific DNA binding"/>
    <property type="evidence" value="ECO:0000314"/>
    <property type="project" value="ARUK-UCL"/>
</dbReference>
<dbReference type="GO" id="GO:0043565">
    <property type="term" value="F:sequence-specific DNA binding"/>
    <property type="evidence" value="ECO:0000314"/>
    <property type="project" value="AgBase"/>
</dbReference>
<dbReference type="GO" id="GO:0034605">
    <property type="term" value="P:cellular response to heat"/>
    <property type="evidence" value="ECO:0000314"/>
    <property type="project" value="AgBase"/>
</dbReference>
<dbReference type="GO" id="GO:1902808">
    <property type="term" value="P:positive regulation of cell cycle G1/S phase transition"/>
    <property type="evidence" value="ECO:0000315"/>
    <property type="project" value="AgBase"/>
</dbReference>
<dbReference type="GO" id="GO:1902751">
    <property type="term" value="P:positive regulation of cell cycle G2/M phase transition"/>
    <property type="evidence" value="ECO:0000315"/>
    <property type="project" value="AgBase"/>
</dbReference>
<dbReference type="GO" id="GO:0008284">
    <property type="term" value="P:positive regulation of cell population proliferation"/>
    <property type="evidence" value="ECO:0000315"/>
    <property type="project" value="AgBase"/>
</dbReference>
<dbReference type="GO" id="GO:0010628">
    <property type="term" value="P:positive regulation of gene expression"/>
    <property type="evidence" value="ECO:0000315"/>
    <property type="project" value="AgBase"/>
</dbReference>
<dbReference type="GO" id="GO:0045944">
    <property type="term" value="P:positive regulation of transcription by RNA polymerase II"/>
    <property type="evidence" value="ECO:0000314"/>
    <property type="project" value="ARUK-UCL"/>
</dbReference>
<dbReference type="GO" id="GO:0070207">
    <property type="term" value="P:protein homotrimerization"/>
    <property type="evidence" value="ECO:0000314"/>
    <property type="project" value="AgBase"/>
</dbReference>
<dbReference type="GO" id="GO:0031620">
    <property type="term" value="P:regulation of fever generation"/>
    <property type="evidence" value="ECO:0000315"/>
    <property type="project" value="AgBase"/>
</dbReference>
<dbReference type="GO" id="GO:0009408">
    <property type="term" value="P:response to heat"/>
    <property type="evidence" value="ECO:0000314"/>
    <property type="project" value="AgBase"/>
</dbReference>
<dbReference type="FunFam" id="1.10.10.10:FF:000027">
    <property type="entry name" value="Heat shock transcription factor 1"/>
    <property type="match status" value="1"/>
</dbReference>
<dbReference type="Gene3D" id="1.10.10.10">
    <property type="entry name" value="Winged helix-like DNA-binding domain superfamily/Winged helix DNA-binding domain"/>
    <property type="match status" value="1"/>
</dbReference>
<dbReference type="InterPro" id="IPR000232">
    <property type="entry name" value="HSF_DNA-bd"/>
</dbReference>
<dbReference type="InterPro" id="IPR010542">
    <property type="entry name" value="Vert_HSTF_C"/>
</dbReference>
<dbReference type="InterPro" id="IPR036388">
    <property type="entry name" value="WH-like_DNA-bd_sf"/>
</dbReference>
<dbReference type="InterPro" id="IPR036390">
    <property type="entry name" value="WH_DNA-bd_sf"/>
</dbReference>
<dbReference type="PANTHER" id="PTHR10015:SF454">
    <property type="entry name" value="HEAT SHOCK FACTOR PROTEIN 3"/>
    <property type="match status" value="1"/>
</dbReference>
<dbReference type="PANTHER" id="PTHR10015">
    <property type="entry name" value="HEAT SHOCK TRANSCRIPTION FACTOR"/>
    <property type="match status" value="1"/>
</dbReference>
<dbReference type="Pfam" id="PF00447">
    <property type="entry name" value="HSF_DNA-bind"/>
    <property type="match status" value="1"/>
</dbReference>
<dbReference type="Pfam" id="PF06546">
    <property type="entry name" value="Vert_HS_TF"/>
    <property type="match status" value="1"/>
</dbReference>
<dbReference type="PRINTS" id="PR00056">
    <property type="entry name" value="HSFDOMAIN"/>
</dbReference>
<dbReference type="SMART" id="SM00415">
    <property type="entry name" value="HSF"/>
    <property type="match status" value="1"/>
</dbReference>
<dbReference type="SUPFAM" id="SSF46785">
    <property type="entry name" value="Winged helix' DNA-binding domain"/>
    <property type="match status" value="1"/>
</dbReference>
<dbReference type="PROSITE" id="PS00434">
    <property type="entry name" value="HSF_DOMAIN"/>
    <property type="match status" value="1"/>
</dbReference>
<name>HSF3_CHICK</name>
<protein>
    <recommendedName>
        <fullName>Heat shock factor protein 3</fullName>
        <shortName>HSF 3</shortName>
    </recommendedName>
    <alternativeName>
        <fullName>HSF 3C</fullName>
    </alternativeName>
    <alternativeName>
        <fullName>HSTF 3C</fullName>
    </alternativeName>
    <alternativeName>
        <fullName>Heat shock transcription factor 3</fullName>
        <shortName>HSTF 3</shortName>
    </alternativeName>
</protein>
<reference key="1">
    <citation type="journal article" date="1993" name="Mol. Cell. Biol.">
        <title>Characterization of a novel chicken heat shock transcription factor, heat shock factor 3, suggests a new regulatory pathway.</title>
        <authorList>
            <person name="Nakai A."/>
            <person name="Morimoto R.I."/>
        </authorList>
    </citation>
    <scope>NUCLEOTIDE SEQUENCE [MRNA]</scope>
</reference>
<accession>P38531</accession>
<accession>I7GGG0</accession>
<comment type="function">
    <text>DNA-binding protein that specifically binds heat shock promoter elements (HSE) and activates transcription. HSF3 binds DNA constitutively only when the C-terminal region is deleted.</text>
</comment>
<comment type="subunit">
    <text>Homotrimer.</text>
</comment>
<comment type="interaction">
    <interactant intactId="EBI-16212976">
        <id>P38531</id>
    </interactant>
    <interactant intactId="EBI-366934">
        <id>P06876</id>
        <label>Myb</label>
    </interactant>
    <organismsDiffer>true</organismsDiffer>
    <experiments>2</experiments>
</comment>
<comment type="subcellular location">
    <subcellularLocation>
        <location evidence="1">Cytoplasm</location>
    </subcellularLocation>
    <subcellularLocation>
        <location evidence="1">Nucleus</location>
    </subcellularLocation>
    <text evidence="1">Cytoplasmic during normal growth and moves to the nucleus upon activation.</text>
</comment>
<comment type="tissue specificity">
    <text>Expressed in most tissues. High levels are found in erythrocytes and low levels in liver.</text>
</comment>
<comment type="developmental stage">
    <text>Expressed during development.</text>
</comment>
<comment type="similarity">
    <text evidence="3">Belongs to the HSF family.</text>
</comment>
<gene>
    <name type="primary">HSF3</name>
</gene>
<feature type="chain" id="PRO_0000124576" description="Heat shock factor protein 3">
    <location>
        <begin position="1"/>
        <end position="467"/>
    </location>
</feature>
<feature type="DNA-binding region" evidence="1">
    <location>
        <begin position="16"/>
        <end position="121"/>
    </location>
</feature>
<feature type="region of interest" description="Hydrophobic repeat HR-A/B">
    <location>
        <begin position="128"/>
        <end position="201"/>
    </location>
</feature>
<feature type="region of interest" description="Hydrophobic repeat HR-C">
    <location>
        <begin position="364"/>
        <end position="389"/>
    </location>
</feature>
<feature type="region of interest" description="Disordered" evidence="2">
    <location>
        <begin position="427"/>
        <end position="449"/>
    </location>
</feature>
<organism>
    <name type="scientific">Gallus gallus</name>
    <name type="common">Chicken</name>
    <dbReference type="NCBI Taxonomy" id="9031"/>
    <lineage>
        <taxon>Eukaryota</taxon>
        <taxon>Metazoa</taxon>
        <taxon>Chordata</taxon>
        <taxon>Craniata</taxon>
        <taxon>Vertebrata</taxon>
        <taxon>Euteleostomi</taxon>
        <taxon>Archelosauria</taxon>
        <taxon>Archosauria</taxon>
        <taxon>Dinosauria</taxon>
        <taxon>Saurischia</taxon>
        <taxon>Theropoda</taxon>
        <taxon>Coelurosauria</taxon>
        <taxon>Aves</taxon>
        <taxon>Neognathae</taxon>
        <taxon>Galloanserae</taxon>
        <taxon>Galliformes</taxon>
        <taxon>Phasianidae</taxon>
        <taxon>Phasianinae</taxon>
        <taxon>Gallus</taxon>
    </lineage>
</organism>
<sequence length="467" mass="51869">MREGSALPGAPGAAPVPGFLAKLWALVEDPQSDDVICWSRNGENFCILDEQRFAKELLPKYFKHNNISSFIRQLNMYGFRKVVALENGMITAEKNSVIEFQHPFFKQGNAHLLENIKRKVSAVRTEDLKVCAEDLHKVLSEVQEMREQQNNMDIRLANMKRENKALWKEVAVLRQKHSQQQKLLSKILQFILSLMRGNYIVGVKRKRSLTDAAGASPSKYSRQYVRIPVESGQAMAFSEHNSDDEDGNRTGLIIRDITDTLENATNGLLAVAHTSGRDRETQTALDPGLPICQVSQPNELSCAEPIPPVHINDVSKPNEMGNVAVELHTAQANAPEDPVSVIDSILNENNSGNQNDPLLDREEIQDFLNCIDASLEELQAMLSGKQYSFGSEAFSDVFNPELPALDMNLMETSPGMENIANMEDSTEDLGASERETAGSKGGQEGTESCDSSVLFQNCVLKWNFSSL</sequence>